<protein>
    <recommendedName>
        <fullName evidence="1">Elongation factor Ts</fullName>
        <shortName evidence="1">EF-Ts</shortName>
    </recommendedName>
</protein>
<sequence>MSTITAAEVNKLRTMTGAGMMDCKKALTESGGDFEAAIDILRKKGQKVSAARAENTTSEGIVSITVSADGKNGKLVALACETEPVSKVADFKNLSEAIMAVAVAKKPATTEELSALPLADGRTVQEHIIDLTGKIGEKVTITSYVSMDGEQVVPYIHSNGKLGVMVALKNTGGKDCSEAGRDVAMQAAAMKPVALDKDDVDPKTVEREIEIGKEQARAEGKPEAMLEKIALGKLNKFYKDATLLNQEFVKDNSKSISQMLDGFHKGLTVSAFVRISLS</sequence>
<reference key="1">
    <citation type="journal article" date="2007" name="Appl. Environ. Microbiol.">
        <title>Genome sequence of the cellulolytic gliding bacterium Cytophaga hutchinsonii.</title>
        <authorList>
            <person name="Xie G."/>
            <person name="Bruce D.C."/>
            <person name="Challacombe J.F."/>
            <person name="Chertkov O."/>
            <person name="Detter J.C."/>
            <person name="Gilna P."/>
            <person name="Han C.S."/>
            <person name="Lucas S."/>
            <person name="Misra M."/>
            <person name="Myers G.L."/>
            <person name="Richardson P."/>
            <person name="Tapia R."/>
            <person name="Thayer N."/>
            <person name="Thompson L.S."/>
            <person name="Brettin T.S."/>
            <person name="Henrissat B."/>
            <person name="Wilson D.B."/>
            <person name="McBride M.J."/>
        </authorList>
    </citation>
    <scope>NUCLEOTIDE SEQUENCE [LARGE SCALE GENOMIC DNA]</scope>
    <source>
        <strain>ATCC 33406 / DSM 1761 / JCM 20678 / CIP 103989 / IAM 12607 / NBRC 15051 / NCIMB 9469 / D465</strain>
    </source>
</reference>
<proteinExistence type="inferred from homology"/>
<feature type="chain" id="PRO_0000323451" description="Elongation factor Ts">
    <location>
        <begin position="1"/>
        <end position="278"/>
    </location>
</feature>
<feature type="region of interest" description="Involved in Mg(2+) ion dislocation from EF-Tu" evidence="1">
    <location>
        <begin position="82"/>
        <end position="85"/>
    </location>
</feature>
<comment type="function">
    <text evidence="1">Associates with the EF-Tu.GDP complex and induces the exchange of GDP to GTP. It remains bound to the aminoacyl-tRNA.EF-Tu.GTP complex up to the GTP hydrolysis stage on the ribosome.</text>
</comment>
<comment type="subcellular location">
    <subcellularLocation>
        <location evidence="1">Cytoplasm</location>
    </subcellularLocation>
</comment>
<comment type="similarity">
    <text evidence="1">Belongs to the EF-Ts family.</text>
</comment>
<dbReference type="EMBL" id="CP000383">
    <property type="protein sequence ID" value="ABG60277.1"/>
    <property type="molecule type" value="Genomic_DNA"/>
</dbReference>
<dbReference type="RefSeq" id="WP_011586387.1">
    <property type="nucleotide sequence ID" value="NC_008255.1"/>
</dbReference>
<dbReference type="SMR" id="Q11QN7"/>
<dbReference type="STRING" id="269798.CHU_3036"/>
<dbReference type="KEGG" id="chu:CHU_3036"/>
<dbReference type="eggNOG" id="COG0264">
    <property type="taxonomic scope" value="Bacteria"/>
</dbReference>
<dbReference type="HOGENOM" id="CLU_047155_0_0_10"/>
<dbReference type="OrthoDB" id="9808348at2"/>
<dbReference type="Proteomes" id="UP000001822">
    <property type="component" value="Chromosome"/>
</dbReference>
<dbReference type="GO" id="GO:0005737">
    <property type="term" value="C:cytoplasm"/>
    <property type="evidence" value="ECO:0007669"/>
    <property type="project" value="UniProtKB-SubCell"/>
</dbReference>
<dbReference type="GO" id="GO:0003746">
    <property type="term" value="F:translation elongation factor activity"/>
    <property type="evidence" value="ECO:0007669"/>
    <property type="project" value="UniProtKB-UniRule"/>
</dbReference>
<dbReference type="CDD" id="cd14275">
    <property type="entry name" value="UBA_EF-Ts"/>
    <property type="match status" value="1"/>
</dbReference>
<dbReference type="FunFam" id="1.10.8.10:FF:000001">
    <property type="entry name" value="Elongation factor Ts"/>
    <property type="match status" value="1"/>
</dbReference>
<dbReference type="Gene3D" id="1.10.286.20">
    <property type="match status" value="1"/>
</dbReference>
<dbReference type="Gene3D" id="1.10.8.10">
    <property type="entry name" value="DNA helicase RuvA subunit, C-terminal domain"/>
    <property type="match status" value="1"/>
</dbReference>
<dbReference type="Gene3D" id="3.30.479.20">
    <property type="entry name" value="Elongation factor Ts, dimerisation domain"/>
    <property type="match status" value="2"/>
</dbReference>
<dbReference type="HAMAP" id="MF_00050">
    <property type="entry name" value="EF_Ts"/>
    <property type="match status" value="1"/>
</dbReference>
<dbReference type="InterPro" id="IPR036402">
    <property type="entry name" value="EF-Ts_dimer_sf"/>
</dbReference>
<dbReference type="InterPro" id="IPR001816">
    <property type="entry name" value="Transl_elong_EFTs/EF1B"/>
</dbReference>
<dbReference type="InterPro" id="IPR014039">
    <property type="entry name" value="Transl_elong_EFTs/EF1B_dimer"/>
</dbReference>
<dbReference type="InterPro" id="IPR018101">
    <property type="entry name" value="Transl_elong_Ts_CS"/>
</dbReference>
<dbReference type="InterPro" id="IPR009060">
    <property type="entry name" value="UBA-like_sf"/>
</dbReference>
<dbReference type="NCBIfam" id="TIGR00116">
    <property type="entry name" value="tsf"/>
    <property type="match status" value="1"/>
</dbReference>
<dbReference type="PANTHER" id="PTHR11741">
    <property type="entry name" value="ELONGATION FACTOR TS"/>
    <property type="match status" value="1"/>
</dbReference>
<dbReference type="PANTHER" id="PTHR11741:SF0">
    <property type="entry name" value="ELONGATION FACTOR TS, MITOCHONDRIAL"/>
    <property type="match status" value="1"/>
</dbReference>
<dbReference type="Pfam" id="PF00889">
    <property type="entry name" value="EF_TS"/>
    <property type="match status" value="1"/>
</dbReference>
<dbReference type="SUPFAM" id="SSF54713">
    <property type="entry name" value="Elongation factor Ts (EF-Ts), dimerisation domain"/>
    <property type="match status" value="2"/>
</dbReference>
<dbReference type="SUPFAM" id="SSF46934">
    <property type="entry name" value="UBA-like"/>
    <property type="match status" value="1"/>
</dbReference>
<dbReference type="PROSITE" id="PS01126">
    <property type="entry name" value="EF_TS_1"/>
    <property type="match status" value="1"/>
</dbReference>
<organism>
    <name type="scientific">Cytophaga hutchinsonii (strain ATCC 33406 / DSM 1761 / CIP 103989 / NBRC 15051 / NCIMB 9469 / D465)</name>
    <dbReference type="NCBI Taxonomy" id="269798"/>
    <lineage>
        <taxon>Bacteria</taxon>
        <taxon>Pseudomonadati</taxon>
        <taxon>Bacteroidota</taxon>
        <taxon>Cytophagia</taxon>
        <taxon>Cytophagales</taxon>
        <taxon>Cytophagaceae</taxon>
        <taxon>Cytophaga</taxon>
    </lineage>
</organism>
<gene>
    <name evidence="1" type="primary">tsf</name>
    <name type="ordered locus">CHU_3036</name>
</gene>
<keyword id="KW-0963">Cytoplasm</keyword>
<keyword id="KW-0251">Elongation factor</keyword>
<keyword id="KW-0648">Protein biosynthesis</keyword>
<keyword id="KW-1185">Reference proteome</keyword>
<evidence type="ECO:0000255" key="1">
    <source>
        <dbReference type="HAMAP-Rule" id="MF_00050"/>
    </source>
</evidence>
<name>EFTS_CYTH3</name>
<accession>Q11QN7</accession>